<comment type="similarity">
    <text evidence="1">Belongs to the UPF0125 (RnfH) family.</text>
</comment>
<sequence>MNELIEIEVVYGRPDKQVLLSLSVPVGSTLEDCIKLSGITTHFPEIIPSEAMVGIFSRADKLSSIVKAGDRIEIYRPLTADPKEMRKLRAAKMSKK</sequence>
<gene>
    <name evidence="1" type="primary">rnfH</name>
    <name type="ordered locus">Ping_1604</name>
</gene>
<dbReference type="EMBL" id="CP000510">
    <property type="protein sequence ID" value="ABM03401.1"/>
    <property type="molecule type" value="Genomic_DNA"/>
</dbReference>
<dbReference type="RefSeq" id="WP_011769961.1">
    <property type="nucleotide sequence ID" value="NC_008709.1"/>
</dbReference>
<dbReference type="SMR" id="A1SV86"/>
<dbReference type="STRING" id="357804.Ping_1604"/>
<dbReference type="KEGG" id="pin:Ping_1604"/>
<dbReference type="eggNOG" id="COG2914">
    <property type="taxonomic scope" value="Bacteria"/>
</dbReference>
<dbReference type="HOGENOM" id="CLU_150721_1_0_6"/>
<dbReference type="OrthoDB" id="9796575at2"/>
<dbReference type="Proteomes" id="UP000000639">
    <property type="component" value="Chromosome"/>
</dbReference>
<dbReference type="Gene3D" id="3.10.20.280">
    <property type="entry name" value="RnfH-like"/>
    <property type="match status" value="1"/>
</dbReference>
<dbReference type="HAMAP" id="MF_00460">
    <property type="entry name" value="UPF0125_RnfH"/>
    <property type="match status" value="1"/>
</dbReference>
<dbReference type="InterPro" id="IPR016155">
    <property type="entry name" value="Mopterin_synth/thiamin_S_b"/>
</dbReference>
<dbReference type="InterPro" id="IPR005346">
    <property type="entry name" value="RnfH"/>
</dbReference>
<dbReference type="InterPro" id="IPR037021">
    <property type="entry name" value="RnfH_sf"/>
</dbReference>
<dbReference type="NCBIfam" id="NF002490">
    <property type="entry name" value="PRK01777.1"/>
    <property type="match status" value="1"/>
</dbReference>
<dbReference type="PANTHER" id="PTHR37483">
    <property type="entry name" value="UPF0125 PROTEIN RATB"/>
    <property type="match status" value="1"/>
</dbReference>
<dbReference type="PANTHER" id="PTHR37483:SF1">
    <property type="entry name" value="UPF0125 PROTEIN RATB"/>
    <property type="match status" value="1"/>
</dbReference>
<dbReference type="Pfam" id="PF03658">
    <property type="entry name" value="Ub-RnfH"/>
    <property type="match status" value="1"/>
</dbReference>
<dbReference type="SUPFAM" id="SSF54285">
    <property type="entry name" value="MoaD/ThiS"/>
    <property type="match status" value="1"/>
</dbReference>
<proteinExistence type="inferred from homology"/>
<organism>
    <name type="scientific">Psychromonas ingrahamii (strain DSM 17664 / CCUG 51855 / 37)</name>
    <dbReference type="NCBI Taxonomy" id="357804"/>
    <lineage>
        <taxon>Bacteria</taxon>
        <taxon>Pseudomonadati</taxon>
        <taxon>Pseudomonadota</taxon>
        <taxon>Gammaproteobacteria</taxon>
        <taxon>Alteromonadales</taxon>
        <taxon>Psychromonadaceae</taxon>
        <taxon>Psychromonas</taxon>
    </lineage>
</organism>
<name>RNFH_PSYIN</name>
<evidence type="ECO:0000255" key="1">
    <source>
        <dbReference type="HAMAP-Rule" id="MF_00460"/>
    </source>
</evidence>
<feature type="chain" id="PRO_1000200190" description="Protein RnfH">
    <location>
        <begin position="1"/>
        <end position="96"/>
    </location>
</feature>
<reference key="1">
    <citation type="journal article" date="2008" name="BMC Genomics">
        <title>Genomics of an extreme psychrophile, Psychromonas ingrahamii.</title>
        <authorList>
            <person name="Riley M."/>
            <person name="Staley J.T."/>
            <person name="Danchin A."/>
            <person name="Wang T.Z."/>
            <person name="Brettin T.S."/>
            <person name="Hauser L.J."/>
            <person name="Land M.L."/>
            <person name="Thompson L.S."/>
        </authorList>
    </citation>
    <scope>NUCLEOTIDE SEQUENCE [LARGE SCALE GENOMIC DNA]</scope>
    <source>
        <strain>DSM 17664 / CCUG 51855 / 37</strain>
    </source>
</reference>
<keyword id="KW-1185">Reference proteome</keyword>
<accession>A1SV86</accession>
<protein>
    <recommendedName>
        <fullName evidence="1">Protein RnfH</fullName>
    </recommendedName>
</protein>